<proteinExistence type="inferred from homology"/>
<feature type="chain" id="PRO_1000095838" description="Tryptophan synthase beta chain">
    <location>
        <begin position="1"/>
        <end position="405"/>
    </location>
</feature>
<feature type="modified residue" description="N6-(pyridoxal phosphate)lysine" evidence="1">
    <location>
        <position position="98"/>
    </location>
</feature>
<organism>
    <name type="scientific">Xanthomonas oryzae pv. oryzae (strain PXO99A)</name>
    <dbReference type="NCBI Taxonomy" id="360094"/>
    <lineage>
        <taxon>Bacteria</taxon>
        <taxon>Pseudomonadati</taxon>
        <taxon>Pseudomonadota</taxon>
        <taxon>Gammaproteobacteria</taxon>
        <taxon>Lysobacterales</taxon>
        <taxon>Lysobacteraceae</taxon>
        <taxon>Xanthomonas</taxon>
    </lineage>
</organism>
<keyword id="KW-0028">Amino-acid biosynthesis</keyword>
<keyword id="KW-0057">Aromatic amino acid biosynthesis</keyword>
<keyword id="KW-0456">Lyase</keyword>
<keyword id="KW-0663">Pyridoxal phosphate</keyword>
<keyword id="KW-0822">Tryptophan biosynthesis</keyword>
<reference key="1">
    <citation type="journal article" date="2008" name="BMC Genomics">
        <title>Genome sequence and rapid evolution of the rice pathogen Xanthomonas oryzae pv. oryzae PXO99A.</title>
        <authorList>
            <person name="Salzberg S.L."/>
            <person name="Sommer D.D."/>
            <person name="Schatz M.C."/>
            <person name="Phillippy A.M."/>
            <person name="Rabinowicz P.D."/>
            <person name="Tsuge S."/>
            <person name="Furutani A."/>
            <person name="Ochiai H."/>
            <person name="Delcher A.L."/>
            <person name="Kelley D."/>
            <person name="Madupu R."/>
            <person name="Puiu D."/>
            <person name="Radune D."/>
            <person name="Shumway M."/>
            <person name="Trapnell C."/>
            <person name="Aparna G."/>
            <person name="Jha G."/>
            <person name="Pandey A."/>
            <person name="Patil P.B."/>
            <person name="Ishihara H."/>
            <person name="Meyer D.F."/>
            <person name="Szurek B."/>
            <person name="Verdier V."/>
            <person name="Koebnik R."/>
            <person name="Dow J.M."/>
            <person name="Ryan R.P."/>
            <person name="Hirata H."/>
            <person name="Tsuyumu S."/>
            <person name="Won Lee S."/>
            <person name="Seo Y.-S."/>
            <person name="Sriariyanum M."/>
            <person name="Ronald P.C."/>
            <person name="Sonti R.V."/>
            <person name="Van Sluys M.-A."/>
            <person name="Leach J.E."/>
            <person name="White F.F."/>
            <person name="Bogdanove A.J."/>
        </authorList>
    </citation>
    <scope>NUCLEOTIDE SEQUENCE [LARGE SCALE GENOMIC DNA]</scope>
    <source>
        <strain>PXO99A</strain>
    </source>
</reference>
<gene>
    <name evidence="1" type="primary">trpB</name>
    <name type="ordered locus">PXO_01270</name>
</gene>
<comment type="function">
    <text evidence="1">The beta subunit is responsible for the synthesis of L-tryptophan from indole and L-serine.</text>
</comment>
<comment type="catalytic activity">
    <reaction evidence="1">
        <text>(1S,2R)-1-C-(indol-3-yl)glycerol 3-phosphate + L-serine = D-glyceraldehyde 3-phosphate + L-tryptophan + H2O</text>
        <dbReference type="Rhea" id="RHEA:10532"/>
        <dbReference type="ChEBI" id="CHEBI:15377"/>
        <dbReference type="ChEBI" id="CHEBI:33384"/>
        <dbReference type="ChEBI" id="CHEBI:57912"/>
        <dbReference type="ChEBI" id="CHEBI:58866"/>
        <dbReference type="ChEBI" id="CHEBI:59776"/>
        <dbReference type="EC" id="4.2.1.20"/>
    </reaction>
</comment>
<comment type="cofactor">
    <cofactor evidence="1">
        <name>pyridoxal 5'-phosphate</name>
        <dbReference type="ChEBI" id="CHEBI:597326"/>
    </cofactor>
</comment>
<comment type="pathway">
    <text evidence="1">Amino-acid biosynthesis; L-tryptophan biosynthesis; L-tryptophan from chorismate: step 5/5.</text>
</comment>
<comment type="subunit">
    <text evidence="1">Tetramer of two alpha and two beta chains.</text>
</comment>
<comment type="similarity">
    <text evidence="1">Belongs to the TrpB family.</text>
</comment>
<protein>
    <recommendedName>
        <fullName evidence="1">Tryptophan synthase beta chain</fullName>
        <ecNumber evidence="1">4.2.1.20</ecNumber>
    </recommendedName>
</protein>
<accession>B2SVN7</accession>
<sequence>MSAQPISDFYAYPDAAGHFGKFGGRFVAETLIGPLQELSAAYDQARQDPSFIAEYDKDLKHYVGRPSPIYHAERLSREVGGAQILLKREDLNHTGAHKINNTIGQALLASRMGKTRIIAETGAGQHGVASATVAARLGLECLVYMGATDIERQKINVYRMKLLGATVIPVTSGSATLKDALNEAMRDWVTNVRDTFYIIGTVAGPDPYPRMVRDFNAIVGREARAQMLEDYGRLPDAISACVGGGSNAIGLFHAFLNDPGVKIYGAEAAGDGIATGRHAASIAAGRPGVLHGNRTYVICDDDGQITETHSISAGLDYPGVGPEHAFLSDSGRAVYQGITDDEAMAAFHLLAHTEGILAALESSHAVAQSIKLARELPKDALVLCNLSGRGDKDVHTIAAREGLAL</sequence>
<name>TRPB_XANOP</name>
<evidence type="ECO:0000255" key="1">
    <source>
        <dbReference type="HAMAP-Rule" id="MF_00133"/>
    </source>
</evidence>
<dbReference type="EC" id="4.2.1.20" evidence="1"/>
<dbReference type="EMBL" id="CP000967">
    <property type="protein sequence ID" value="ACD60111.1"/>
    <property type="molecule type" value="Genomic_DNA"/>
</dbReference>
<dbReference type="RefSeq" id="WP_012445544.1">
    <property type="nucleotide sequence ID" value="NC_010717.2"/>
</dbReference>
<dbReference type="SMR" id="B2SVN7"/>
<dbReference type="KEGG" id="xop:PXO_01270"/>
<dbReference type="eggNOG" id="COG0133">
    <property type="taxonomic scope" value="Bacteria"/>
</dbReference>
<dbReference type="HOGENOM" id="CLU_016734_3_1_6"/>
<dbReference type="UniPathway" id="UPA00035">
    <property type="reaction ID" value="UER00044"/>
</dbReference>
<dbReference type="Proteomes" id="UP000001740">
    <property type="component" value="Chromosome"/>
</dbReference>
<dbReference type="GO" id="GO:0005737">
    <property type="term" value="C:cytoplasm"/>
    <property type="evidence" value="ECO:0007669"/>
    <property type="project" value="TreeGrafter"/>
</dbReference>
<dbReference type="GO" id="GO:0004834">
    <property type="term" value="F:tryptophan synthase activity"/>
    <property type="evidence" value="ECO:0007669"/>
    <property type="project" value="UniProtKB-UniRule"/>
</dbReference>
<dbReference type="CDD" id="cd06446">
    <property type="entry name" value="Trp-synth_B"/>
    <property type="match status" value="1"/>
</dbReference>
<dbReference type="FunFam" id="3.40.50.1100:FF:000001">
    <property type="entry name" value="Tryptophan synthase beta chain"/>
    <property type="match status" value="1"/>
</dbReference>
<dbReference type="FunFam" id="3.40.50.1100:FF:000004">
    <property type="entry name" value="Tryptophan synthase beta chain"/>
    <property type="match status" value="1"/>
</dbReference>
<dbReference type="Gene3D" id="3.40.50.1100">
    <property type="match status" value="2"/>
</dbReference>
<dbReference type="HAMAP" id="MF_00133">
    <property type="entry name" value="Trp_synth_beta"/>
    <property type="match status" value="1"/>
</dbReference>
<dbReference type="InterPro" id="IPR006653">
    <property type="entry name" value="Trp_synth_b_CS"/>
</dbReference>
<dbReference type="InterPro" id="IPR006654">
    <property type="entry name" value="Trp_synth_beta"/>
</dbReference>
<dbReference type="InterPro" id="IPR023026">
    <property type="entry name" value="Trp_synth_beta/beta-like"/>
</dbReference>
<dbReference type="InterPro" id="IPR001926">
    <property type="entry name" value="TrpB-like_PALP"/>
</dbReference>
<dbReference type="InterPro" id="IPR036052">
    <property type="entry name" value="TrpB-like_PALP_sf"/>
</dbReference>
<dbReference type="NCBIfam" id="TIGR00263">
    <property type="entry name" value="trpB"/>
    <property type="match status" value="1"/>
</dbReference>
<dbReference type="PANTHER" id="PTHR48077:SF3">
    <property type="entry name" value="TRYPTOPHAN SYNTHASE"/>
    <property type="match status" value="1"/>
</dbReference>
<dbReference type="PANTHER" id="PTHR48077">
    <property type="entry name" value="TRYPTOPHAN SYNTHASE-RELATED"/>
    <property type="match status" value="1"/>
</dbReference>
<dbReference type="Pfam" id="PF00291">
    <property type="entry name" value="PALP"/>
    <property type="match status" value="1"/>
</dbReference>
<dbReference type="PIRSF" id="PIRSF001413">
    <property type="entry name" value="Trp_syn_beta"/>
    <property type="match status" value="1"/>
</dbReference>
<dbReference type="SUPFAM" id="SSF53686">
    <property type="entry name" value="Tryptophan synthase beta subunit-like PLP-dependent enzymes"/>
    <property type="match status" value="1"/>
</dbReference>
<dbReference type="PROSITE" id="PS00168">
    <property type="entry name" value="TRP_SYNTHASE_BETA"/>
    <property type="match status" value="1"/>
</dbReference>